<gene>
    <name type="ordered locus">YPTB0717</name>
</gene>
<accession>Q66EH6</accession>
<comment type="similarity">
    <text evidence="1">Belongs to the UPF0231 family.</text>
</comment>
<name>Y717_YERPS</name>
<reference key="1">
    <citation type="journal article" date="2004" name="Proc. Natl. Acad. Sci. U.S.A.">
        <title>Insights into the evolution of Yersinia pestis through whole-genome comparison with Yersinia pseudotuberculosis.</title>
        <authorList>
            <person name="Chain P.S.G."/>
            <person name="Carniel E."/>
            <person name="Larimer F.W."/>
            <person name="Lamerdin J."/>
            <person name="Stoutland P.O."/>
            <person name="Regala W.M."/>
            <person name="Georgescu A.M."/>
            <person name="Vergez L.M."/>
            <person name="Land M.L."/>
            <person name="Motin V.L."/>
            <person name="Brubaker R.R."/>
            <person name="Fowler J."/>
            <person name="Hinnebusch J."/>
            <person name="Marceau M."/>
            <person name="Medigue C."/>
            <person name="Simonet M."/>
            <person name="Chenal-Francisque V."/>
            <person name="Souza B."/>
            <person name="Dacheux D."/>
            <person name="Elliott J.M."/>
            <person name="Derbise A."/>
            <person name="Hauser L.J."/>
            <person name="Garcia E."/>
        </authorList>
    </citation>
    <scope>NUCLEOTIDE SEQUENCE [LARGE SCALE GENOMIC DNA]</scope>
    <source>
        <strain>IP32953</strain>
    </source>
</reference>
<evidence type="ECO:0000255" key="1">
    <source>
        <dbReference type="HAMAP-Rule" id="MF_01053"/>
    </source>
</evidence>
<organism>
    <name type="scientific">Yersinia pseudotuberculosis serotype I (strain IP32953)</name>
    <dbReference type="NCBI Taxonomy" id="273123"/>
    <lineage>
        <taxon>Bacteria</taxon>
        <taxon>Pseudomonadati</taxon>
        <taxon>Pseudomonadota</taxon>
        <taxon>Gammaproteobacteria</taxon>
        <taxon>Enterobacterales</taxon>
        <taxon>Yersiniaceae</taxon>
        <taxon>Yersinia</taxon>
    </lineage>
</organism>
<feature type="chain" id="PRO_1000064379" description="UPF0231 protein YPTB0717">
    <location>
        <begin position="1"/>
        <end position="119"/>
    </location>
</feature>
<protein>
    <recommendedName>
        <fullName evidence="1">UPF0231 protein YPTB0717</fullName>
    </recommendedName>
</protein>
<sequence>MDYEFLRDLTGQVLVKFSMGHEVIGHWLNEEIKGDLVKLDHIETAADGVRGSERQWQLPGHEYTLWLDGEEVMVRANQLDLDGDEMEEGMNYYDEESLCLCGLEDFLLVLKGYRAFITQ</sequence>
<dbReference type="EMBL" id="BX936398">
    <property type="protein sequence ID" value="CAH19957.1"/>
    <property type="molecule type" value="Genomic_DNA"/>
</dbReference>
<dbReference type="SMR" id="Q66EH6"/>
<dbReference type="KEGG" id="ypo:BZ17_1838"/>
<dbReference type="KEGG" id="yps:YPTB0717"/>
<dbReference type="PATRIC" id="fig|273123.14.peg.1950"/>
<dbReference type="Proteomes" id="UP000001011">
    <property type="component" value="Chromosome"/>
</dbReference>
<dbReference type="HAMAP" id="MF_01053">
    <property type="entry name" value="UPF0231"/>
    <property type="match status" value="1"/>
</dbReference>
<dbReference type="InterPro" id="IPR008249">
    <property type="entry name" value="UPF0231"/>
</dbReference>
<dbReference type="NCBIfam" id="NF003574">
    <property type="entry name" value="PRK05248.1-1"/>
    <property type="match status" value="1"/>
</dbReference>
<dbReference type="NCBIfam" id="NF003576">
    <property type="entry name" value="PRK05248.1-3"/>
    <property type="match status" value="1"/>
</dbReference>
<dbReference type="Pfam" id="PF06062">
    <property type="entry name" value="UPF0231"/>
    <property type="match status" value="1"/>
</dbReference>
<dbReference type="PIRSF" id="PIRSF006287">
    <property type="entry name" value="UCP006287"/>
    <property type="match status" value="1"/>
</dbReference>
<proteinExistence type="inferred from homology"/>